<sequence length="192" mass="22911">MAPRRPAKRLVTALCRAFSGRGCQLAPKRGAERRDAAPSRVSRFCPPRKSRHDWIGPPDKYSNLRPIHFYIPENESPLEQKLRELRQETQEWNQQFWADQNLTFHKEKEEFVRSRLKAKGLDLRTASGQKATLNAEEMAEFYKEFLSKNFQKHMYYNRDWYKRNFAITFFMGKVALERIWNKLRPKQKKTSS</sequence>
<reference key="1">
    <citation type="submission" date="2006-06" db="EMBL/GenBank/DDBJ databases">
        <authorList>
            <consortium name="NIH - Mammalian Gene Collection (MGC) project"/>
        </authorList>
    </citation>
    <scope>NUCLEOTIDE SEQUENCE [LARGE SCALE MRNA]</scope>
    <source>
        <strain>Hereford</strain>
        <tissue>Fetal cerebellum</tissue>
    </source>
</reference>
<keyword id="KW-0053">Apoptosis</keyword>
<keyword id="KW-0472">Membrane</keyword>
<keyword id="KW-0496">Mitochondrion</keyword>
<keyword id="KW-0999">Mitochondrion inner membrane</keyword>
<keyword id="KW-1185">Reference proteome</keyword>
<keyword id="KW-0809">Transit peptide</keyword>
<keyword id="KW-0832">Ubl conjugation</keyword>
<organism>
    <name type="scientific">Bos taurus</name>
    <name type="common">Bovine</name>
    <dbReference type="NCBI Taxonomy" id="9913"/>
    <lineage>
        <taxon>Eukaryota</taxon>
        <taxon>Metazoa</taxon>
        <taxon>Chordata</taxon>
        <taxon>Craniata</taxon>
        <taxon>Vertebrata</taxon>
        <taxon>Euteleostomi</taxon>
        <taxon>Mammalia</taxon>
        <taxon>Eutheria</taxon>
        <taxon>Laurasiatheria</taxon>
        <taxon>Artiodactyla</taxon>
        <taxon>Ruminantia</taxon>
        <taxon>Pecora</taxon>
        <taxon>Bovidae</taxon>
        <taxon>Bovinae</taxon>
        <taxon>Bos</taxon>
    </lineage>
</organism>
<comment type="function">
    <text evidence="1">Required for cytochrome c complex (COX) IV assembly and function Protects COX assembly from oxidation-induced degradation, COX being the terminal component of the mitochondrial respiratory chain.</text>
</comment>
<comment type="subcellular location">
    <subcellularLocation>
        <location evidence="2">Mitochondrion inner membrane</location>
        <topology evidence="1">Peripheral membrane protein</topology>
        <orientation evidence="1">Matrix side</orientation>
    </subcellularLocation>
</comment>
<comment type="induction">
    <text evidence="1 2">In conditions of increased oxidative stress, the protein is stabilized, increasing its mature intramitochondrial form and thereby protecting COX from oxidatively induced degradation.</text>
</comment>
<comment type="PTM">
    <text evidence="1">N-terminal mitochondrial targeting sequence is cleaved from the mature protein once in the mitochondrion.</text>
</comment>
<comment type="PTM">
    <text evidence="1">In normal conditions, the cytoplasmic precursor protein is rapidly degraded by the ubiquitination-proteasome system (UPS). Oxidative stress induces protein stabilization and import into mitochondria where it protects COX from degradation.</text>
</comment>
<comment type="similarity">
    <text evidence="4">Belongs to the COA8 family.</text>
</comment>
<comment type="caution">
    <text evidence="1 2">First thought to play a role in the regulation of apoptosis, mediating mitochondria-induced cell death in vascular smooth muscle cells through the release of cytochrome c (COX) from mitochondria and the activation of the caspase cascade. However, recent studies show that it is not directly involved in apoptosis regulation but in the protection of COX from oxidatively induced degradation.</text>
</comment>
<feature type="transit peptide" description="Mitochondrion" evidence="3">
    <location>
        <begin position="1"/>
        <end position="10"/>
    </location>
</feature>
<feature type="chain" id="PRO_0000353107" description="Cytochrome c oxidase assembly factor 8">
    <location>
        <begin position="11"/>
        <end position="192"/>
    </location>
</feature>
<name>COA8_BOVIN</name>
<evidence type="ECO:0000250" key="1">
    <source>
        <dbReference type="UniProtKB" id="Q96IL0"/>
    </source>
</evidence>
<evidence type="ECO:0000250" key="2">
    <source>
        <dbReference type="UniProtKB" id="Q9CQW7"/>
    </source>
</evidence>
<evidence type="ECO:0000255" key="3"/>
<evidence type="ECO:0000305" key="4"/>
<proteinExistence type="evidence at transcript level"/>
<gene>
    <name type="primary">COA8</name>
    <name type="synonym">APOP1</name>
    <name type="synonym">APOPT1</name>
</gene>
<protein>
    <recommendedName>
        <fullName evidence="4">Cytochrome c oxidase assembly factor 8</fullName>
        <shortName>COA8</shortName>
    </recommendedName>
    <alternativeName>
        <fullName>Apoptogenic protein 1, mitochondrial</fullName>
        <shortName>APOP-1</shortName>
    </alternativeName>
</protein>
<accession>Q148E1</accession>
<dbReference type="EMBL" id="BC118424">
    <property type="protein sequence ID" value="AAI18425.1"/>
    <property type="molecule type" value="mRNA"/>
</dbReference>
<dbReference type="RefSeq" id="NP_001069927.1">
    <property type="nucleotide sequence ID" value="NM_001076459.2"/>
</dbReference>
<dbReference type="FunCoup" id="Q148E1">
    <property type="interactions" value="1334"/>
</dbReference>
<dbReference type="STRING" id="9913.ENSBTAP00000028246"/>
<dbReference type="PaxDb" id="9913-ENSBTAP00000028246"/>
<dbReference type="GeneID" id="617441"/>
<dbReference type="KEGG" id="bta:617441"/>
<dbReference type="CTD" id="84334"/>
<dbReference type="VEuPathDB" id="HostDB:ENSBTAG00000021199"/>
<dbReference type="eggNOG" id="KOG4094">
    <property type="taxonomic scope" value="Eukaryota"/>
</dbReference>
<dbReference type="HOGENOM" id="CLU_118274_0_0_1"/>
<dbReference type="InParanoid" id="Q148E1"/>
<dbReference type="OMA" id="AWNQEFW"/>
<dbReference type="OrthoDB" id="6246201at2759"/>
<dbReference type="TreeFam" id="TF315168"/>
<dbReference type="Proteomes" id="UP000009136">
    <property type="component" value="Chromosome 21"/>
</dbReference>
<dbReference type="Bgee" id="ENSBTAG00000021199">
    <property type="expression patterns" value="Expressed in semen and 105 other cell types or tissues"/>
</dbReference>
<dbReference type="GO" id="GO:0099617">
    <property type="term" value="C:matrix side of mitochondrial inner membrane"/>
    <property type="evidence" value="ECO:0000250"/>
    <property type="project" value="UniProtKB"/>
</dbReference>
<dbReference type="GO" id="GO:0005739">
    <property type="term" value="C:mitochondrion"/>
    <property type="evidence" value="ECO:0000250"/>
    <property type="project" value="UniProtKB"/>
</dbReference>
<dbReference type="GO" id="GO:0097193">
    <property type="term" value="P:intrinsic apoptotic signaling pathway"/>
    <property type="evidence" value="ECO:0007669"/>
    <property type="project" value="InterPro"/>
</dbReference>
<dbReference type="GO" id="GO:0033617">
    <property type="term" value="P:mitochondrial cytochrome c oxidase assembly"/>
    <property type="evidence" value="ECO:0000250"/>
    <property type="project" value="UniProtKB"/>
</dbReference>
<dbReference type="GO" id="GO:0050821">
    <property type="term" value="P:protein stabilization"/>
    <property type="evidence" value="ECO:0000250"/>
    <property type="project" value="UniProtKB"/>
</dbReference>
<dbReference type="GO" id="GO:0000302">
    <property type="term" value="P:response to reactive oxygen species"/>
    <property type="evidence" value="ECO:0000250"/>
    <property type="project" value="UniProtKB"/>
</dbReference>
<dbReference type="InterPro" id="IPR018796">
    <property type="entry name" value="COA8"/>
</dbReference>
<dbReference type="PANTHER" id="PTHR31107">
    <property type="entry name" value="APOPTOGENIC PROTEIN 1, MITOCHONDRIAL"/>
    <property type="match status" value="1"/>
</dbReference>
<dbReference type="PANTHER" id="PTHR31107:SF2">
    <property type="entry name" value="CYTOCHROME C OXIDASE ASSEMBLY FACTOR 8"/>
    <property type="match status" value="1"/>
</dbReference>
<dbReference type="Pfam" id="PF10231">
    <property type="entry name" value="COA8"/>
    <property type="match status" value="1"/>
</dbReference>